<organism>
    <name type="scientific">Helicobacter hepaticus (strain ATCC 51449 / 3B1)</name>
    <dbReference type="NCBI Taxonomy" id="235279"/>
    <lineage>
        <taxon>Bacteria</taxon>
        <taxon>Pseudomonadati</taxon>
        <taxon>Campylobacterota</taxon>
        <taxon>Epsilonproteobacteria</taxon>
        <taxon>Campylobacterales</taxon>
        <taxon>Helicobacteraceae</taxon>
        <taxon>Helicobacter</taxon>
    </lineage>
</organism>
<keyword id="KW-0067">ATP-binding</keyword>
<keyword id="KW-0460">Magnesium</keyword>
<keyword id="KW-0547">Nucleotide-binding</keyword>
<keyword id="KW-1185">Reference proteome</keyword>
<keyword id="KW-0808">Transferase</keyword>
<keyword id="KW-0819">tRNA processing</keyword>
<dbReference type="EC" id="2.5.1.75" evidence="1"/>
<dbReference type="EMBL" id="AE017125">
    <property type="protein sequence ID" value="AAP77507.1"/>
    <property type="molecule type" value="Genomic_DNA"/>
</dbReference>
<dbReference type="RefSeq" id="WP_011115750.1">
    <property type="nucleotide sequence ID" value="NC_004917.1"/>
</dbReference>
<dbReference type="SMR" id="Q7U323"/>
<dbReference type="STRING" id="235279.HH_0910"/>
<dbReference type="KEGG" id="hhe:HH_0910"/>
<dbReference type="eggNOG" id="COG0324">
    <property type="taxonomic scope" value="Bacteria"/>
</dbReference>
<dbReference type="HOGENOM" id="CLU_032616_0_1_7"/>
<dbReference type="OrthoDB" id="9776390at2"/>
<dbReference type="Proteomes" id="UP000002495">
    <property type="component" value="Chromosome"/>
</dbReference>
<dbReference type="GO" id="GO:0005524">
    <property type="term" value="F:ATP binding"/>
    <property type="evidence" value="ECO:0007669"/>
    <property type="project" value="UniProtKB-UniRule"/>
</dbReference>
<dbReference type="GO" id="GO:0052381">
    <property type="term" value="F:tRNA dimethylallyltransferase activity"/>
    <property type="evidence" value="ECO:0007669"/>
    <property type="project" value="UniProtKB-UniRule"/>
</dbReference>
<dbReference type="GO" id="GO:0006400">
    <property type="term" value="P:tRNA modification"/>
    <property type="evidence" value="ECO:0007669"/>
    <property type="project" value="TreeGrafter"/>
</dbReference>
<dbReference type="Gene3D" id="1.10.20.140">
    <property type="match status" value="1"/>
</dbReference>
<dbReference type="Gene3D" id="3.40.50.300">
    <property type="entry name" value="P-loop containing nucleotide triphosphate hydrolases"/>
    <property type="match status" value="1"/>
</dbReference>
<dbReference type="HAMAP" id="MF_00185">
    <property type="entry name" value="IPP_trans"/>
    <property type="match status" value="1"/>
</dbReference>
<dbReference type="InterPro" id="IPR039657">
    <property type="entry name" value="Dimethylallyltransferase"/>
</dbReference>
<dbReference type="InterPro" id="IPR018022">
    <property type="entry name" value="IPT"/>
</dbReference>
<dbReference type="InterPro" id="IPR027417">
    <property type="entry name" value="P-loop_NTPase"/>
</dbReference>
<dbReference type="NCBIfam" id="TIGR00174">
    <property type="entry name" value="miaA"/>
    <property type="match status" value="1"/>
</dbReference>
<dbReference type="PANTHER" id="PTHR11088">
    <property type="entry name" value="TRNA DIMETHYLALLYLTRANSFERASE"/>
    <property type="match status" value="1"/>
</dbReference>
<dbReference type="PANTHER" id="PTHR11088:SF60">
    <property type="entry name" value="TRNA DIMETHYLALLYLTRANSFERASE"/>
    <property type="match status" value="1"/>
</dbReference>
<dbReference type="Pfam" id="PF01715">
    <property type="entry name" value="IPPT"/>
    <property type="match status" value="1"/>
</dbReference>
<dbReference type="SUPFAM" id="SSF52540">
    <property type="entry name" value="P-loop containing nucleoside triphosphate hydrolases"/>
    <property type="match status" value="1"/>
</dbReference>
<name>MIAA_HELHP</name>
<reference key="1">
    <citation type="journal article" date="2003" name="Proc. Natl. Acad. Sci. U.S.A.">
        <title>The complete genome sequence of the carcinogenic bacterium Helicobacter hepaticus.</title>
        <authorList>
            <person name="Suerbaum S."/>
            <person name="Josenhans C."/>
            <person name="Sterzenbach T."/>
            <person name="Drescher B."/>
            <person name="Brandt P."/>
            <person name="Bell M."/>
            <person name="Droege M."/>
            <person name="Fartmann B."/>
            <person name="Fischer H.-P."/>
            <person name="Ge Z."/>
            <person name="Hoerster A."/>
            <person name="Holland R."/>
            <person name="Klein K."/>
            <person name="Koenig J."/>
            <person name="Macko L."/>
            <person name="Mendz G.L."/>
            <person name="Nyakatura G."/>
            <person name="Schauer D.B."/>
            <person name="Shen Z."/>
            <person name="Weber J."/>
            <person name="Frosch M."/>
            <person name="Fox J.G."/>
        </authorList>
    </citation>
    <scope>NUCLEOTIDE SEQUENCE [LARGE SCALE GENOMIC DNA]</scope>
    <source>
        <strain>ATCC 51449 / 3B1</strain>
    </source>
</reference>
<accession>Q7U323</accession>
<comment type="function">
    <text evidence="1">Catalyzes the transfer of a dimethylallyl group onto the adenine at position 37 in tRNAs that read codons beginning with uridine, leading to the formation of N6-(dimethylallyl)adenosine (i(6)A).</text>
</comment>
<comment type="catalytic activity">
    <reaction evidence="1">
        <text>adenosine(37) in tRNA + dimethylallyl diphosphate = N(6)-dimethylallyladenosine(37) in tRNA + diphosphate</text>
        <dbReference type="Rhea" id="RHEA:26482"/>
        <dbReference type="Rhea" id="RHEA-COMP:10162"/>
        <dbReference type="Rhea" id="RHEA-COMP:10375"/>
        <dbReference type="ChEBI" id="CHEBI:33019"/>
        <dbReference type="ChEBI" id="CHEBI:57623"/>
        <dbReference type="ChEBI" id="CHEBI:74411"/>
        <dbReference type="ChEBI" id="CHEBI:74415"/>
        <dbReference type="EC" id="2.5.1.75"/>
    </reaction>
</comment>
<comment type="cofactor">
    <cofactor evidence="1">
        <name>Mg(2+)</name>
        <dbReference type="ChEBI" id="CHEBI:18420"/>
    </cofactor>
</comment>
<comment type="subunit">
    <text evidence="1">Monomer.</text>
</comment>
<comment type="similarity">
    <text evidence="1">Belongs to the IPP transferase family.</text>
</comment>
<gene>
    <name evidence="1" type="primary">miaA</name>
    <name type="ordered locus">HH_0910</name>
</gene>
<protein>
    <recommendedName>
        <fullName evidence="1">tRNA dimethylallyltransferase</fullName>
        <ecNumber evidence="1">2.5.1.75</ecNumber>
    </recommendedName>
    <alternativeName>
        <fullName evidence="1">Dimethylallyl diphosphate:tRNA dimethylallyltransferase</fullName>
        <shortName evidence="1">DMAPP:tRNA dimethylallyltransferase</shortName>
        <shortName evidence="1">DMATase</shortName>
    </alternativeName>
    <alternativeName>
        <fullName evidence="1">Isopentenyl-diphosphate:tRNA isopentenyltransferase</fullName>
        <shortName evidence="1">IPP transferase</shortName>
        <shortName evidence="1">IPPT</shortName>
        <shortName evidence="1">IPTase</shortName>
    </alternativeName>
</protein>
<evidence type="ECO:0000255" key="1">
    <source>
        <dbReference type="HAMAP-Rule" id="MF_00185"/>
    </source>
</evidence>
<sequence length="302" mass="34054">MKIIAVLGSSGSGKSALAHRIAMEQNCKIFSLDSLSIYKYLDIASAKPTLLEQSQVCYYALNILEPHQKSNVMIFKDLLLQSIEDIKNNSPHTPLLIVGGSSFFLKSIMEGLSPMPPLEEHEEWVKSLGNISMQYAQLTQIDKTYAQSLSPTDTYRICKALALFKATNTPPSIYFATHKKESLGYDIEIFCLECERDELRERIAKRTKAMIQKGIVEEVQNVLEAYGAQAPALNAIGAKECVNFLQGKVATLQQLEEQIFFHTCQLAKRQRTFNRTQFAQITHLKEKALEAQLIQQIHNNIL</sequence>
<feature type="chain" id="PRO_0000377184" description="tRNA dimethylallyltransferase">
    <location>
        <begin position="1"/>
        <end position="302"/>
    </location>
</feature>
<feature type="region of interest" description="Interaction with substrate tRNA" evidence="1">
    <location>
        <begin position="33"/>
        <end position="36"/>
    </location>
</feature>
<feature type="binding site" evidence="1">
    <location>
        <begin position="8"/>
        <end position="15"/>
    </location>
    <ligand>
        <name>ATP</name>
        <dbReference type="ChEBI" id="CHEBI:30616"/>
    </ligand>
</feature>
<feature type="binding site" evidence="1">
    <location>
        <begin position="10"/>
        <end position="15"/>
    </location>
    <ligand>
        <name>substrate</name>
    </ligand>
</feature>
<feature type="site" description="Interaction with substrate tRNA" evidence="1">
    <location>
        <position position="101"/>
    </location>
</feature>
<proteinExistence type="inferred from homology"/>